<organism>
    <name type="scientific">Helicobacter pylori (strain Shi470)</name>
    <dbReference type="NCBI Taxonomy" id="512562"/>
    <lineage>
        <taxon>Bacteria</taxon>
        <taxon>Pseudomonadati</taxon>
        <taxon>Campylobacterota</taxon>
        <taxon>Epsilonproteobacteria</taxon>
        <taxon>Campylobacterales</taxon>
        <taxon>Helicobacteraceae</taxon>
        <taxon>Helicobacter</taxon>
    </lineage>
</organism>
<proteinExistence type="inferred from homology"/>
<evidence type="ECO:0000255" key="1">
    <source>
        <dbReference type="HAMAP-Rule" id="MF_00161"/>
    </source>
</evidence>
<feature type="chain" id="PRO_1000097259" description="Lipoprotein signal peptidase">
    <location>
        <begin position="1"/>
        <end position="157"/>
    </location>
</feature>
<feature type="transmembrane region" description="Helical" evidence="1">
    <location>
        <begin position="10"/>
        <end position="30"/>
    </location>
</feature>
<feature type="transmembrane region" description="Helical" evidence="1">
    <location>
        <begin position="58"/>
        <end position="78"/>
    </location>
</feature>
<feature type="transmembrane region" description="Helical" evidence="1">
    <location>
        <begin position="84"/>
        <end position="104"/>
    </location>
</feature>
<feature type="transmembrane region" description="Helical" evidence="1">
    <location>
        <begin position="122"/>
        <end position="142"/>
    </location>
</feature>
<feature type="active site" evidence="1">
    <location>
        <position position="114"/>
    </location>
</feature>
<feature type="active site" evidence="1">
    <location>
        <position position="131"/>
    </location>
</feature>
<accession>B2UW72</accession>
<comment type="function">
    <text evidence="1">This protein specifically catalyzes the removal of signal peptides from prolipoproteins.</text>
</comment>
<comment type="catalytic activity">
    <reaction evidence="1">
        <text>Release of signal peptides from bacterial membrane prolipoproteins. Hydrolyzes -Xaa-Yaa-Zaa-|-(S,diacylglyceryl)Cys-, in which Xaa is hydrophobic (preferably Leu), and Yaa (Ala or Ser) and Zaa (Gly or Ala) have small, neutral side chains.</text>
        <dbReference type="EC" id="3.4.23.36"/>
    </reaction>
</comment>
<comment type="pathway">
    <text evidence="1">Protein modification; lipoprotein biosynthesis (signal peptide cleavage).</text>
</comment>
<comment type="subcellular location">
    <subcellularLocation>
        <location evidence="1">Cell inner membrane</location>
        <topology evidence="1">Multi-pass membrane protein</topology>
    </subcellularLocation>
</comment>
<comment type="similarity">
    <text evidence="1">Belongs to the peptidase A8 family.</text>
</comment>
<name>LSPA_HELPS</name>
<reference key="1">
    <citation type="submission" date="2008-05" db="EMBL/GenBank/DDBJ databases">
        <title>Genome sequence of Helicobacter pylori from the remote Amazon: traces of Asian ancestry of the first Americans.</title>
        <authorList>
            <person name="Kersulyte D."/>
            <person name="Kalia A."/>
            <person name="Gilman R.H."/>
            <person name="Berg D.E."/>
        </authorList>
    </citation>
    <scope>NUCLEOTIDE SEQUENCE [LARGE SCALE GENOMIC DNA]</scope>
    <source>
        <strain>Shi470</strain>
    </source>
</reference>
<dbReference type="EC" id="3.4.23.36" evidence="1"/>
<dbReference type="EMBL" id="CP001072">
    <property type="protein sequence ID" value="ACD47537.1"/>
    <property type="molecule type" value="Genomic_DNA"/>
</dbReference>
<dbReference type="RefSeq" id="WP_000921400.1">
    <property type="nucleotide sequence ID" value="NC_010698.2"/>
</dbReference>
<dbReference type="SMR" id="B2UW72"/>
<dbReference type="KEGG" id="hps:HPSH_00360"/>
<dbReference type="HOGENOM" id="CLU_083252_4_3_7"/>
<dbReference type="UniPathway" id="UPA00665"/>
<dbReference type="GO" id="GO:0005886">
    <property type="term" value="C:plasma membrane"/>
    <property type="evidence" value="ECO:0007669"/>
    <property type="project" value="UniProtKB-SubCell"/>
</dbReference>
<dbReference type="GO" id="GO:0004190">
    <property type="term" value="F:aspartic-type endopeptidase activity"/>
    <property type="evidence" value="ECO:0007669"/>
    <property type="project" value="UniProtKB-UniRule"/>
</dbReference>
<dbReference type="GO" id="GO:0006508">
    <property type="term" value="P:proteolysis"/>
    <property type="evidence" value="ECO:0007669"/>
    <property type="project" value="UniProtKB-KW"/>
</dbReference>
<dbReference type="HAMAP" id="MF_00161">
    <property type="entry name" value="LspA"/>
    <property type="match status" value="1"/>
</dbReference>
<dbReference type="InterPro" id="IPR001872">
    <property type="entry name" value="Peptidase_A8"/>
</dbReference>
<dbReference type="NCBIfam" id="TIGR00077">
    <property type="entry name" value="lspA"/>
    <property type="match status" value="1"/>
</dbReference>
<dbReference type="PANTHER" id="PTHR33695">
    <property type="entry name" value="LIPOPROTEIN SIGNAL PEPTIDASE"/>
    <property type="match status" value="1"/>
</dbReference>
<dbReference type="PANTHER" id="PTHR33695:SF1">
    <property type="entry name" value="LIPOPROTEIN SIGNAL PEPTIDASE"/>
    <property type="match status" value="1"/>
</dbReference>
<dbReference type="Pfam" id="PF01252">
    <property type="entry name" value="Peptidase_A8"/>
    <property type="match status" value="1"/>
</dbReference>
<dbReference type="PRINTS" id="PR00781">
    <property type="entry name" value="LIPOSIGPTASE"/>
</dbReference>
<dbReference type="PROSITE" id="PS00855">
    <property type="entry name" value="SPASE_II"/>
    <property type="match status" value="1"/>
</dbReference>
<gene>
    <name evidence="1" type="primary">lspA</name>
    <name type="ordered locus">HPSH_00360</name>
</gene>
<protein>
    <recommendedName>
        <fullName evidence="1">Lipoprotein signal peptidase</fullName>
        <ecNumber evidence="1">3.4.23.36</ecNumber>
    </recommendedName>
    <alternativeName>
        <fullName evidence="1">Prolipoprotein signal peptidase</fullName>
    </alternativeName>
    <alternativeName>
        <fullName evidence="1">Signal peptidase II</fullName>
        <shortName evidence="1">SPase II</shortName>
    </alternativeName>
</protein>
<sequence length="157" mass="17906">MLKTTQKSLLIFIVVFSLIFGTDQAIKYAILEGFRYESLIIDIVLVFNKGVAFSLLSFLEGGLKYLQILLILGLFIFLMCQKELFKNHAIEFGMVFGAGVSNVLDRFVHGGVVDYVYYHYGFDFAIFNFADVMIDVGVGVLLLRQFFFKQKQNKIKA</sequence>
<keyword id="KW-0064">Aspartyl protease</keyword>
<keyword id="KW-0997">Cell inner membrane</keyword>
<keyword id="KW-1003">Cell membrane</keyword>
<keyword id="KW-0378">Hydrolase</keyword>
<keyword id="KW-0472">Membrane</keyword>
<keyword id="KW-0645">Protease</keyword>
<keyword id="KW-0812">Transmembrane</keyword>
<keyword id="KW-1133">Transmembrane helix</keyword>